<sequence>MEQAPEDQGPQREPHNEWTLELLEELKNEAVRHFPRIWLHGLGQHIYETYGDTWAGVEAIIRILQQLLFIHFRIGCRHSRIGVTRQRRARNGASRS</sequence>
<gene>
    <name evidence="1" type="primary">vpr</name>
</gene>
<reference key="1">
    <citation type="journal article" date="1987" name="AIDS Res. Hum. Retroviruses">
        <title>Complete nucleotide sequences of functional clones of the AIDS virus.</title>
        <authorList>
            <person name="Ratner L."/>
            <person name="Fisher A."/>
            <person name="Jagodzinski L.L."/>
            <person name="Mitsuya H."/>
            <person name="Liou R.-S."/>
            <person name="Gallo R.C."/>
            <person name="Wong-Staal F."/>
        </authorList>
    </citation>
    <scope>NUCLEOTIDE SEQUENCE [GENOMIC RNA]</scope>
</reference>
<reference key="2">
    <citation type="journal article" date="1990" name="J. Acquir. Immune Defic. Syndr.">
        <title>Identification of HIV-1 vpr product and function.</title>
        <authorList>
            <person name="Cohen E.A."/>
            <person name="Terwilliger E.F."/>
            <person name="Jalinoos Y."/>
            <person name="Proulx J."/>
            <person name="Sodroski J.G."/>
            <person name="Haseltine W.A."/>
        </authorList>
    </citation>
    <scope>FUNCTION</scope>
    <source>
        <strain>isolate BRU/LAI</strain>
    </source>
</reference>
<reference key="3">
    <citation type="journal article" date="1990" name="J. Virol.">
        <title>Human immunodeficiency virus vpr product is a virion-associated regulatory protein.</title>
        <authorList>
            <person name="Cohen E.A."/>
            <person name="Dehni G."/>
            <person name="Sodroski J.G."/>
            <person name="Haseltine W.A."/>
        </authorList>
    </citation>
    <scope>SUBCELLULAR LOCATION</scope>
    <source>
        <strain>isolate BRU/LAI</strain>
    </source>
</reference>
<reference key="4">
    <citation type="journal article" date="1993" name="J. Virol.">
        <title>Human immunodeficiency virus type 1 viral protein R localization in infected cells and virions.</title>
        <authorList>
            <person name="Lu Y.L."/>
            <person name="Spearman P."/>
            <person name="Ratner L."/>
        </authorList>
    </citation>
    <scope>SUBCELLULAR LOCATION</scope>
    <source>
        <strain>isolate BRU/LAI</strain>
    </source>
</reference>
<reference key="5">
    <citation type="journal article" date="1994" name="J. Biol. Chem.">
        <title>Biochemical mechanism of HIV-1 Vpr function. Oligomerization mediated by the N-terminal domain.</title>
        <authorList>
            <person name="Zhao L.J."/>
            <person name="Wang L."/>
            <person name="Mukherjee S."/>
            <person name="Narayan O."/>
        </authorList>
    </citation>
    <scope>HOMOOLIGOMERIZATION</scope>
</reference>
<reference key="6">
    <citation type="journal article" date="1995" name="J. Virol.">
        <title>A leucine triplet repeat sequence (LXX)4 in p6gag is important for Vpr incorporation into human immunodeficiency virus type 1 particles.</title>
        <authorList>
            <person name="Lu Y.L."/>
            <person name="Bennett R.P."/>
            <person name="Wills J.W."/>
            <person name="Gorelick R."/>
            <person name="Ratner L."/>
        </authorList>
    </citation>
    <scope>INTERACTION WITH P6-GAG</scope>
    <source>
        <strain>isolate BRU/LAI</strain>
    </source>
</reference>
<reference key="7">
    <citation type="journal article" date="1995" name="J. Virol.">
        <title>Human immunodeficiency virus type 1 Vpr arrests the cell cycle in G2 by inhibiting the activation of p34cdc2-cyclin B.</title>
        <authorList>
            <person name="Re F."/>
            <person name="Braaten D."/>
            <person name="Franke E.K."/>
            <person name="Luban J."/>
        </authorList>
    </citation>
    <scope>FUNCTION</scope>
    <source>
        <strain>isolate BRU/LAI</strain>
    </source>
</reference>
<reference key="8">
    <citation type="journal article" date="1995" name="J. Virol.">
        <title>The human immunodeficiency virus type 1 vpr gene arrests infected T cells in the G2 + M phase of the cell cycle.</title>
        <authorList>
            <person name="Jowett J.B."/>
            <person name="Planelles V."/>
            <person name="Poon B."/>
            <person name="Shah N.P."/>
            <person name="Chen M.L."/>
            <person name="Chen I.S."/>
        </authorList>
    </citation>
    <scope>FUNCTION</scope>
    <source>
        <strain>isolate BRU/LAI</strain>
    </source>
</reference>
<reference key="9">
    <citation type="journal article" date="1997" name="J. Virol.">
        <title>Uracil DNA glycosylase specifically interacts with Vpr of both human immunodeficiency virus type 1 and simian immunodeficiency virus of sooty mangabeys, but binding does not correlate with cell cycle arrest.</title>
        <authorList>
            <person name="Selig L."/>
            <person name="Benichou S."/>
            <person name="Rogel M.E."/>
            <person name="Wu L.I."/>
            <person name="Vodicka M.A."/>
            <person name="Sire J."/>
            <person name="Benarous R."/>
            <person name="Emerman M."/>
        </authorList>
    </citation>
    <scope>INTERACTION WITH HUMAN UNG</scope>
    <source>
        <strain>isolate BRU/LAI</strain>
    </source>
</reference>
<reference key="10">
    <citation type="journal article" date="1997" name="J. Virol.">
        <title>Human immunodeficiency virus type 1 Vpr interacts with HHR23A, a cellular protein implicated in nucleotide excision DNA repair.</title>
        <authorList>
            <person name="Withers-Ward E.S."/>
            <person name="Jowett J.B."/>
            <person name="Stewart S.A."/>
            <person name="Xie Y.M."/>
            <person name="Garfinkel A."/>
            <person name="Shibagaki Y."/>
            <person name="Chow S.A."/>
            <person name="Shah N."/>
            <person name="Hanaoka F."/>
            <person name="Sawitz D.G."/>
            <person name="Armstrong R.W."/>
            <person name="Souza L.M."/>
            <person name="Chen I.S."/>
        </authorList>
    </citation>
    <scope>INTERACTION WITH HUMAN RAD23A</scope>
    <source>
        <strain>isolate BRU/LAI</strain>
    </source>
</reference>
<reference key="11">
    <citation type="journal article" date="1999" name="Proc. Natl. Acad. Sci. U.S.A.">
        <title>Lentiviral delivery of HIV-1 Vpr protein induces apoptosis in transformed cells.</title>
        <authorList>
            <person name="Stewart S.A."/>
            <person name="Poon B."/>
            <person name="Jowett J.B."/>
            <person name="Xie Y."/>
            <person name="Chen I.S."/>
        </authorList>
    </citation>
    <scope>FUNCTION</scope>
</reference>
<reference key="12">
    <citation type="journal article" date="2000" name="J. Virol.">
        <title>Human immunodeficiency virus type 1 Vpr induces apoptosis in human neuronal cells.</title>
        <authorList>
            <person name="Patel C.A."/>
            <person name="Mukhtar M."/>
            <person name="Pomerantz R.J."/>
        </authorList>
    </citation>
    <scope>FUNCTION</scope>
</reference>
<reference key="13">
    <citation type="journal article" date="2000" name="J. Virol.">
        <title>Phosphorylation of human immunodeficiency virus type 1 Vpr regulates cell cycle arrest.</title>
        <authorList>
            <person name="Zhou Y."/>
            <person name="Ratner L."/>
        </authorList>
    </citation>
    <scope>PHOSPHORYLATION AT SER-79; SER-94 AND SER-96</scope>
    <source>
        <strain>Clone pNL4-3</strain>
    </source>
</reference>
<reference key="14">
    <citation type="journal article" date="2002" name="J. Cell Biol.">
        <title>Visualization of the intracellular behavior of HIV in living cells.</title>
        <authorList>
            <person name="McDonald D."/>
            <person name="Vodicka M.A."/>
            <person name="Lucero G."/>
            <person name="Svitkina T.M."/>
            <person name="Borisy G.G."/>
            <person name="Emerman M."/>
            <person name="Hope T.J."/>
        </authorList>
    </citation>
    <scope>FUNCTION</scope>
    <source>
        <strain>isolate BRU/LAI</strain>
    </source>
</reference>
<reference key="15">
    <citation type="journal article" date="2002" name="AIDS Res. Hum. Retroviruses">
        <title>Phosphorylation of Vpr regulates HIV type 1 nuclear import and macrophage infection.</title>
        <authorList>
            <person name="Agostini I."/>
            <person name="Popov S."/>
            <person name="Hao T."/>
            <person name="Li J.H."/>
            <person name="Dubrovsky L."/>
            <person name="Chaika O."/>
            <person name="Chaika N."/>
            <person name="Lewis R."/>
            <person name="Bukrinsky M."/>
        </authorList>
    </citation>
    <scope>PHOSPHORYLATION AT SER-79</scope>
    <source>
        <strain>isolate BRU/LAI</strain>
    </source>
</reference>
<reference key="16">
    <citation type="journal article" date="2006" name="Mol. Cells">
        <title>Role of HIV Vpr as a regulator of apoptosis and an effector on bystander cells.</title>
        <authorList>
            <person name="Moon H.S."/>
            <person name="Yang J.S."/>
        </authorList>
    </citation>
    <scope>REVIEW</scope>
</reference>
<reference key="17">
    <citation type="journal article" date="2007" name="Cell Cycle">
        <title>HIV1 Vpr arrests the cell cycle by recruiting DCAF1/VprBP, a receptor of the Cul4-DDB1 ubiquitin ligase.</title>
        <authorList>
            <person name="Le Rouzic E."/>
            <person name="Belaiedouni N."/>
            <person name="Estrabaud E."/>
            <person name="Morel M."/>
            <person name="Rain J.-C."/>
            <person name="Transy C."/>
            <person name="Margottin-Goguet F."/>
        </authorList>
    </citation>
    <scope>FUNCTION</scope>
    <scope>SUBUNIT</scope>
    <source>
        <strain>isolate BRU/LAI</strain>
    </source>
</reference>
<reference key="18">
    <citation type="journal article" date="2007" name="PLoS Pathog.">
        <title>HIV-1 Vpr-mediated G2 arrest involves the DDB1-CUL4A[VPRBP] E3 ubiquitin ligase.</title>
        <authorList>
            <person name="Belzile J.P."/>
            <person name="Duisit G."/>
            <person name="Rougeau N."/>
            <person name="Mercier J."/>
            <person name="Finzi A."/>
            <person name="Cohen E.A."/>
        </authorList>
    </citation>
    <scope>FUNCTION</scope>
    <scope>SUBUNIT</scope>
    <source>
        <strain>isolate BRU/LAI</strain>
    </source>
</reference>
<reference key="19">
    <citation type="journal article" date="2013" name="J. Biol. Chem.">
        <title>HIV-1 Vpr protein inhibits telomerase activity via the EDD-DDB1-VPRBP E3 ligase complex.</title>
        <authorList>
            <person name="Wang X."/>
            <person name="Singh S."/>
            <person name="Jung H.Y."/>
            <person name="Yang G."/>
            <person name="Jun S."/>
            <person name="Sastry K.J."/>
            <person name="Park J.I."/>
        </authorList>
    </citation>
    <scope>FUNCTION</scope>
    <scope>INTERACTION WITH HOST DCAF1</scope>
    <source>
        <strain>isolate BRU/LAI</strain>
    </source>
</reference>
<reference key="20">
    <citation type="journal article" date="2013" name="PLoS ONE">
        <title>HIV-1 Vpr Induces the Degradation of ZIP and sZIP, Adaptors of the NuRD Chromatin Remodeling Complex, by Hijacking DCAF1/VprBP.</title>
        <authorList>
            <person name="Maudet C."/>
            <person name="Sourisce A."/>
            <person name="Dragin L."/>
            <person name="Lahouassa H."/>
            <person name="Rain J.C."/>
            <person name="Bouaziz S."/>
            <person name="Ramirez B.C."/>
            <person name="Margottin-Goguet F."/>
        </authorList>
    </citation>
    <scope>FUNCTION</scope>
    <scope>INTERACTION WITH HOST DCAF1</scope>
    <source>
        <strain>isolate BRU/LAI</strain>
    </source>
</reference>
<reference key="21">
    <citation type="journal article" date="2014" name="Front. Microbiol.">
        <title>HIV-1 Vpr-a still 'enigmatic multitasker'.</title>
        <authorList>
            <person name="Guenzel C.A."/>
            <person name="Herate C."/>
            <person name="Benichou S."/>
        </authorList>
    </citation>
    <scope>REVIEW</scope>
</reference>
<protein>
    <recommendedName>
        <fullName evidence="1">Protein Vpr</fullName>
    </recommendedName>
    <alternativeName>
        <fullName evidence="1">R ORF protein</fullName>
    </alternativeName>
    <alternativeName>
        <fullName evidence="1">Viral protein R</fullName>
    </alternativeName>
</protein>
<proteinExistence type="evidence at protein level"/>
<evidence type="ECO:0000255" key="1">
    <source>
        <dbReference type="HAMAP-Rule" id="MF_04080"/>
    </source>
</evidence>
<evidence type="ECO:0000269" key="2">
    <source>
    </source>
</evidence>
<evidence type="ECO:0000269" key="3">
    <source>
    </source>
</evidence>
<evidence type="ECO:0000269" key="4">
    <source>
    </source>
</evidence>
<evidence type="ECO:0000269" key="5">
    <source>
    </source>
</evidence>
<evidence type="ECO:0000269" key="6">
    <source>
    </source>
</evidence>
<evidence type="ECO:0000269" key="7">
    <source>
    </source>
</evidence>
<evidence type="ECO:0000269" key="8">
    <source>
    </source>
</evidence>
<evidence type="ECO:0000269" key="9">
    <source>
    </source>
</evidence>
<evidence type="ECO:0000269" key="10">
    <source>
    </source>
</evidence>
<evidence type="ECO:0000269" key="11">
    <source>
    </source>
</evidence>
<evidence type="ECO:0000269" key="12">
    <source>
    </source>
</evidence>
<evidence type="ECO:0000269" key="13">
    <source>
    </source>
</evidence>
<evidence type="ECO:0000269" key="14">
    <source>
    </source>
</evidence>
<evidence type="ECO:0000269" key="15">
    <source>
    </source>
</evidence>
<evidence type="ECO:0000269" key="16">
    <source>
    </source>
</evidence>
<evidence type="ECO:0000269" key="17">
    <source>
    </source>
</evidence>
<evidence type="ECO:0000269" key="18">
    <source>
    </source>
</evidence>
<evidence type="ECO:0000269" key="19">
    <source>
    </source>
</evidence>
<evidence type="ECO:0000269" key="20">
    <source>
    </source>
</evidence>
<evidence type="ECO:0000305" key="21"/>
<organismHost>
    <name type="scientific">Homo sapiens</name>
    <name type="common">Human</name>
    <dbReference type="NCBI Taxonomy" id="9606"/>
</organismHost>
<name>VPR_HV1H2</name>
<feature type="chain" id="PRO_0000085451" description="Protein Vpr">
    <location>
        <begin position="1"/>
        <end position="96"/>
    </location>
</feature>
<feature type="region of interest" description="Homooligomerization" evidence="1 17">
    <location>
        <begin position="1"/>
        <end position="42"/>
    </location>
</feature>
<feature type="modified residue" description="Phosphoserine; by host" evidence="1 3 5">
    <location>
        <position position="79"/>
    </location>
</feature>
<feature type="modified residue" description="Phosphoserine; by host" evidence="1 3">
    <location>
        <position position="94"/>
    </location>
</feature>
<feature type="modified residue" description="Phosphoserine; by host" evidence="1 3">
    <location>
        <position position="96"/>
    </location>
</feature>
<comment type="function">
    <text evidence="1 2 6 9">During virus entry, plays a role in the transport of the viral pre-integration (PIC) complex to the host nucleus. This function is crucial for viral infection of non-dividing macrophages. May act directly at the nuclear pore complex, by binding nucleoporins phenylalanine-glycine (FG)-repeat regions.</text>
</comment>
<comment type="function">
    <text evidence="1 4 6 7 8 11 12 14 16">During virus replication, may deplete host UNG protein, and incude G2-M cell cycle arrest. Acts by targeting specific host proteins for degradation by the 26S proteasome, through association with the cellular CUL4A-DDB1 E3 ligase complex by direct interaction with host VPRPB/DCAF-1. Cell cycle arrest reportedly occurs within hours of infection and is not blocked by antiviral agents, suggesting that it is initiated by the VPR carried into the virion. Additionally, VPR induces apoptosis in a cell cycle dependent manner suggesting that these two effects are mechanistically linked. Detected in the serum and cerebrospinal fluid of AIDS patient, VPR may also induce cell death to bystander cells.</text>
</comment>
<comment type="subunit">
    <text evidence="1 7 11 12 15 17 19 20">Homooligomer, may form homodimer. Interacts with p6-gag region of the Pr55 Gag precursor protein through a (Leu-X-X)4 motif near the C-terminus of the P6gag protein. Interacts with host UNG. May interact with host RAD23A/HHR23A. Interacts with host VPRBP/DCAF1, leading to hijack the CUL4A-RBX1-DDB1-DCAF1/VPRBP complex, mediating ubiquitination of host proteins such as TERT and ZGPAT and arrest of the cell cycle in G2 phase.</text>
</comment>
<comment type="subcellular location">
    <subcellularLocation>
        <location evidence="1 10 18">Virion</location>
    </subcellularLocation>
    <subcellularLocation>
        <location evidence="1 18">Host nucleus</location>
    </subcellularLocation>
    <subcellularLocation>
        <location evidence="1">Host extracellular space</location>
    </subcellularLocation>
    <text evidence="1 13">Incorporation into virion is dependent on p6 GAG sequences. Lacks a canonical nuclear localization signal, thus import into nucleus may function independently of the human importin pathway. Detected in high quantity in the serum and cerebrospinal fluid of AIDS patient.</text>
</comment>
<comment type="PTM">
    <text evidence="1 3 5">Phosphorylated on several residues by host. These phosphorylations regulate VPR activity for the nuclear import of the HIV-1 pre-integration complex.</text>
</comment>
<comment type="miscellaneous">
    <text evidence="1">HIV-1 lineages are divided in three main groups, M (for Major), O (for Outlier), and N (for New, or Non-M, Non-O). The vast majority of strains found worldwide belong to the group M. Group O seems to be endemic to and largely confined to Cameroon and neighboring countries in West Central Africa, where these viruses represent a small minority of HIV-1 strains. The group N is represented by a limited number of isolates from Cameroonian persons. The group M is further subdivided in 9 clades or subtypes (A to D, F to H, J and K).</text>
</comment>
<comment type="similarity">
    <text evidence="1">Belongs to the HIV-1 VPR protein family.</text>
</comment>
<comment type="sequence caution" evidence="21">
    <conflict type="frameshift">
        <sequence resource="EMBL-CDS" id="AAB50261"/>
    </conflict>
</comment>
<accession>P69726</accession>
<accession>P05926</accession>
<accession>Q85577</accession>
<dbReference type="EMBL" id="K03455">
    <property type="protein sequence ID" value="AAB50261.1"/>
    <property type="status" value="ALT_FRAME"/>
    <property type="molecule type" value="Genomic_RNA"/>
</dbReference>
<dbReference type="PDB" id="4U1S">
    <property type="method" value="X-ray"/>
    <property type="resolution" value="1.76 A"/>
    <property type="chains" value="C=34-42"/>
</dbReference>
<dbReference type="PDBsum" id="4U1S"/>
<dbReference type="SMR" id="P69726"/>
<dbReference type="IntAct" id="P69726">
    <property type="interactions" value="4"/>
</dbReference>
<dbReference type="iPTMnet" id="P69726"/>
<dbReference type="Reactome" id="R-HSA-162585">
    <property type="pathway name" value="Uncoating of the HIV Virion"/>
</dbReference>
<dbReference type="Reactome" id="R-HSA-162588">
    <property type="pathway name" value="Budding and maturation of HIV virion"/>
</dbReference>
<dbReference type="Reactome" id="R-HSA-162592">
    <property type="pathway name" value="Integration of provirus"/>
</dbReference>
<dbReference type="Reactome" id="R-HSA-162594">
    <property type="pathway name" value="Early Phase of HIV Life Cycle"/>
</dbReference>
<dbReference type="Reactome" id="R-HSA-164516">
    <property type="pathway name" value="Minus-strand DNA synthesis"/>
</dbReference>
<dbReference type="Reactome" id="R-HSA-164525">
    <property type="pathway name" value="Plus-strand DNA synthesis"/>
</dbReference>
<dbReference type="Reactome" id="R-HSA-164843">
    <property type="pathway name" value="2-LTR circle formation"/>
</dbReference>
<dbReference type="Reactome" id="R-HSA-173107">
    <property type="pathway name" value="Binding and entry of HIV virion"/>
</dbReference>
<dbReference type="Reactome" id="R-HSA-175474">
    <property type="pathway name" value="Assembly Of The HIV Virion"/>
</dbReference>
<dbReference type="Reactome" id="R-HSA-175567">
    <property type="pathway name" value="Integration of viral DNA into host genomic DNA"/>
</dbReference>
<dbReference type="Reactome" id="R-HSA-177539">
    <property type="pathway name" value="Autointegration results in viral DNA circles"/>
</dbReference>
<dbReference type="Reactome" id="R-HSA-180689">
    <property type="pathway name" value="APOBEC3G mediated resistance to HIV-1 infection"/>
</dbReference>
<dbReference type="Reactome" id="R-HSA-180897">
    <property type="pathway name" value="Vpr-mediated induction of apoptosis by mitochondrial outer membrane permeabilization"/>
</dbReference>
<dbReference type="Reactome" id="R-HSA-180910">
    <property type="pathway name" value="Vpr-mediated nuclear import of PICs"/>
</dbReference>
<dbReference type="EvolutionaryTrace" id="P69726"/>
<dbReference type="Proteomes" id="UP000002241">
    <property type="component" value="Segment"/>
</dbReference>
<dbReference type="GO" id="GO:0043657">
    <property type="term" value="C:host cell"/>
    <property type="evidence" value="ECO:0007669"/>
    <property type="project" value="GOC"/>
</dbReference>
<dbReference type="GO" id="GO:0042025">
    <property type="term" value="C:host cell nucleus"/>
    <property type="evidence" value="ECO:0000314"/>
    <property type="project" value="UniProtKB"/>
</dbReference>
<dbReference type="GO" id="GO:0043655">
    <property type="term" value="C:host extracellular space"/>
    <property type="evidence" value="ECO:0007669"/>
    <property type="project" value="UniProtKB-SubCell"/>
</dbReference>
<dbReference type="GO" id="GO:0044423">
    <property type="term" value="C:virion component"/>
    <property type="evidence" value="ECO:0007669"/>
    <property type="project" value="UniProtKB-UniRule"/>
</dbReference>
<dbReference type="GO" id="GO:0060090">
    <property type="term" value="F:molecular adaptor activity"/>
    <property type="evidence" value="ECO:0000314"/>
    <property type="project" value="UniProt"/>
</dbReference>
<dbReference type="GO" id="GO:0051701">
    <property type="term" value="P:biological process involved in interaction with host"/>
    <property type="evidence" value="ECO:0000353"/>
    <property type="project" value="UniProtKB"/>
</dbReference>
<dbReference type="GO" id="GO:0006351">
    <property type="term" value="P:DNA-templated transcription"/>
    <property type="evidence" value="ECO:0007669"/>
    <property type="project" value="UniProtKB-UniRule"/>
</dbReference>
<dbReference type="GO" id="GO:0034220">
    <property type="term" value="P:monoatomic ion transmembrane transport"/>
    <property type="evidence" value="ECO:0007669"/>
    <property type="project" value="UniProtKB-KW"/>
</dbReference>
<dbReference type="GO" id="GO:0045738">
    <property type="term" value="P:negative regulation of DNA repair"/>
    <property type="evidence" value="ECO:0000314"/>
    <property type="project" value="UniProt"/>
</dbReference>
<dbReference type="GO" id="GO:0051260">
    <property type="term" value="P:protein homooligomerization"/>
    <property type="evidence" value="ECO:0000314"/>
    <property type="project" value="UniProtKB"/>
</dbReference>
<dbReference type="GO" id="GO:0006355">
    <property type="term" value="P:regulation of DNA-templated transcription"/>
    <property type="evidence" value="ECO:0007669"/>
    <property type="project" value="UniProtKB-UniRule"/>
</dbReference>
<dbReference type="GO" id="GO:0046718">
    <property type="term" value="P:symbiont entry into host cell"/>
    <property type="evidence" value="ECO:0007669"/>
    <property type="project" value="UniProtKB-KW"/>
</dbReference>
<dbReference type="GO" id="GO:0052151">
    <property type="term" value="P:symbiont-mediated activation of host apoptosis"/>
    <property type="evidence" value="ECO:0000314"/>
    <property type="project" value="UniProtKB"/>
</dbReference>
<dbReference type="GO" id="GO:0039592">
    <property type="term" value="P:symbiont-mediated arrest of host cell cycle during G2/M transition"/>
    <property type="evidence" value="ECO:0000314"/>
    <property type="project" value="UniProtKB"/>
</dbReference>
<dbReference type="GO" id="GO:0075732">
    <property type="term" value="P:viral penetration into host nucleus"/>
    <property type="evidence" value="ECO:0007669"/>
    <property type="project" value="UniProtKB-UniRule"/>
</dbReference>
<dbReference type="FunFam" id="1.20.5.90:FF:000001">
    <property type="entry name" value="Protein Vpr"/>
    <property type="match status" value="1"/>
</dbReference>
<dbReference type="Gene3D" id="6.10.210.10">
    <property type="match status" value="1"/>
</dbReference>
<dbReference type="Gene3D" id="1.20.5.90">
    <property type="entry name" value="VpR/VpX protein, C-terminal domain"/>
    <property type="match status" value="1"/>
</dbReference>
<dbReference type="HAMAP" id="MF_04080">
    <property type="entry name" value="HIV_VPR"/>
    <property type="match status" value="1"/>
</dbReference>
<dbReference type="InterPro" id="IPR000012">
    <property type="entry name" value="RetroV_VpR/X"/>
</dbReference>
<dbReference type="Pfam" id="PF00522">
    <property type="entry name" value="VPR"/>
    <property type="match status" value="1"/>
</dbReference>
<dbReference type="PRINTS" id="PR00444">
    <property type="entry name" value="HIVVPRVPX"/>
</dbReference>
<keyword id="KW-0002">3D-structure</keyword>
<keyword id="KW-0010">Activator</keyword>
<keyword id="KW-0014">AIDS</keyword>
<keyword id="KW-0053">Apoptosis</keyword>
<keyword id="KW-0131">Cell cycle</keyword>
<keyword id="KW-1079">Host G2/M cell cycle arrest by virus</keyword>
<keyword id="KW-1048">Host nucleus</keyword>
<keyword id="KW-0945">Host-virus interaction</keyword>
<keyword id="KW-0407">Ion channel</keyword>
<keyword id="KW-0406">Ion transport</keyword>
<keyword id="KW-1121">Modulation of host cell cycle by virus</keyword>
<keyword id="KW-0597">Phosphoprotein</keyword>
<keyword id="KW-1185">Reference proteome</keyword>
<keyword id="KW-0804">Transcription</keyword>
<keyword id="KW-0805">Transcription regulation</keyword>
<keyword id="KW-0813">Transport</keyword>
<keyword id="KW-1163">Viral penetration into host nucleus</keyword>
<keyword id="KW-0946">Virion</keyword>
<keyword id="KW-1160">Virus entry into host cell</keyword>
<organism>
    <name type="scientific">Human immunodeficiency virus type 1 group M subtype B (isolate HXB2)</name>
    <name type="common">HIV-1</name>
    <dbReference type="NCBI Taxonomy" id="11706"/>
    <lineage>
        <taxon>Viruses</taxon>
        <taxon>Riboviria</taxon>
        <taxon>Pararnavirae</taxon>
        <taxon>Artverviricota</taxon>
        <taxon>Revtraviricetes</taxon>
        <taxon>Ortervirales</taxon>
        <taxon>Retroviridae</taxon>
        <taxon>Orthoretrovirinae</taxon>
        <taxon>Lentivirus</taxon>
        <taxon>Human immunodeficiency virus type 1</taxon>
    </lineage>
</organism>